<name>SHA_ARATH</name>
<feature type="chain" id="PRO_0000441175" description="SH2 domain-containing protein A">
    <location>
        <begin position="1"/>
        <end position="641"/>
    </location>
</feature>
<feature type="domain" description="SH2" evidence="1">
    <location>
        <begin position="547"/>
        <end position="641"/>
    </location>
</feature>
<feature type="region of interest" description="Disordered" evidence="2">
    <location>
        <begin position="355"/>
        <end position="384"/>
    </location>
</feature>
<feature type="splice variant" id="VSP_059035" description="In isoform 2.">
    <original>Q</original>
    <variation>QINLFCELGEK</variation>
    <location>
        <position position="53"/>
    </location>
</feature>
<feature type="splice variant" id="VSP_059036" description="In isoform 3.">
    <original>D</original>
    <variation>E</variation>
    <location>
        <position position="610"/>
    </location>
</feature>
<feature type="splice variant" id="VSP_059037" description="In isoform 3.">
    <location>
        <begin position="611"/>
        <end position="641"/>
    </location>
</feature>
<sequence>MAGDCAIDTEKYSLLEDFNVDVEVENKAFETFSLCFWVYLLDSTTYPSAIIRQVHSDMSVSAPFLVLDENKKMMLLPLTLLHREAPDPVNTSSWTEVPNVSTTAKFPLQKWVHVGCEVSRNYMRLYICGELVGEQVLTSLMTNGTNSDCARKISLFSVGGDGYSVQGFIHSAEVLPSNLSASYHYTKDPPLWLSVDKPSTSGIELDEDGVWSVVSGTFCSLDVVLTNAIGQPVHKDVKVVASLLYADSGTHVEKRSDFEAFLLVSYEGIELSAEDKPCNLLNGCASFKFKLSQLSSKSDKRLFCIKFEIPEVKANYPFLETVTNQIRCISRNRDSVSSMKRIRLGEEKVSESKIVNGNGTSMEWRPQNHEEDNSSTDSENTEMRDSTAFRRYSIPDWIIFKYCLGNLTERALLLKEITNNSSDEEVSEFADQVSLYSGCSHHGYQIKMARKLIAEGTNAWNLISRNYRHVHWDNVVIEIEEHFMRIAKCSSRSLTHQDFDLLRRICGCYEYITQENFETMWCWLFPVASAVSRGLINGMWRSASPKWIEGFVTKEEAERSLQNQVPGTFILRFPTSRSWPHPDAGSVVVTYVGHDLVIHHRLLTINHICDSSERYTDAKQLQDMLLAEPELSRLGRIIRGI</sequence>
<accession>B5X561</accession>
<accession>A0A1P8AQE5</accession>
<accession>F4I632</accession>
<accession>Q9SHG3</accession>
<evidence type="ECO:0000255" key="1">
    <source>
        <dbReference type="PROSITE-ProRule" id="PRU00191"/>
    </source>
</evidence>
<evidence type="ECO:0000256" key="2">
    <source>
        <dbReference type="SAM" id="MobiDB-lite"/>
    </source>
</evidence>
<evidence type="ECO:0000269" key="3">
    <source>
    </source>
</evidence>
<evidence type="ECO:0000303" key="4">
    <source>
    </source>
</evidence>
<evidence type="ECO:0000303" key="5">
    <source>
    </source>
</evidence>
<evidence type="ECO:0000305" key="6"/>
<evidence type="ECO:0000312" key="7">
    <source>
        <dbReference type="Araport" id="AT1G17040"/>
    </source>
</evidence>
<evidence type="ECO:0000312" key="8">
    <source>
        <dbReference type="EMBL" id="AAD50031.1"/>
    </source>
</evidence>
<keyword id="KW-0025">Alternative splicing</keyword>
<keyword id="KW-0597">Phosphoprotein</keyword>
<keyword id="KW-1185">Reference proteome</keyword>
<keyword id="KW-0727">SH2 domain</keyword>
<reference key="1">
    <citation type="journal article" date="2000" name="Nature">
        <title>Sequence and analysis of chromosome 1 of the plant Arabidopsis thaliana.</title>
        <authorList>
            <person name="Theologis A."/>
            <person name="Ecker J.R."/>
            <person name="Palm C.J."/>
            <person name="Federspiel N.A."/>
            <person name="Kaul S."/>
            <person name="White O."/>
            <person name="Alonso J."/>
            <person name="Altafi H."/>
            <person name="Araujo R."/>
            <person name="Bowman C.L."/>
            <person name="Brooks S.Y."/>
            <person name="Buehler E."/>
            <person name="Chan A."/>
            <person name="Chao Q."/>
            <person name="Chen H."/>
            <person name="Cheuk R.F."/>
            <person name="Chin C.W."/>
            <person name="Chung M.K."/>
            <person name="Conn L."/>
            <person name="Conway A.B."/>
            <person name="Conway A.R."/>
            <person name="Creasy T.H."/>
            <person name="Dewar K."/>
            <person name="Dunn P."/>
            <person name="Etgu P."/>
            <person name="Feldblyum T.V."/>
            <person name="Feng J.-D."/>
            <person name="Fong B."/>
            <person name="Fujii C.Y."/>
            <person name="Gill J.E."/>
            <person name="Goldsmith A.D."/>
            <person name="Haas B."/>
            <person name="Hansen N.F."/>
            <person name="Hughes B."/>
            <person name="Huizar L."/>
            <person name="Hunter J.L."/>
            <person name="Jenkins J."/>
            <person name="Johnson-Hopson C."/>
            <person name="Khan S."/>
            <person name="Khaykin E."/>
            <person name="Kim C.J."/>
            <person name="Koo H.L."/>
            <person name="Kremenetskaia I."/>
            <person name="Kurtz D.B."/>
            <person name="Kwan A."/>
            <person name="Lam B."/>
            <person name="Langin-Hooper S."/>
            <person name="Lee A."/>
            <person name="Lee J.M."/>
            <person name="Lenz C.A."/>
            <person name="Li J.H."/>
            <person name="Li Y.-P."/>
            <person name="Lin X."/>
            <person name="Liu S.X."/>
            <person name="Liu Z.A."/>
            <person name="Luros J.S."/>
            <person name="Maiti R."/>
            <person name="Marziali A."/>
            <person name="Militscher J."/>
            <person name="Miranda M."/>
            <person name="Nguyen M."/>
            <person name="Nierman W.C."/>
            <person name="Osborne B.I."/>
            <person name="Pai G."/>
            <person name="Peterson J."/>
            <person name="Pham P.K."/>
            <person name="Rizzo M."/>
            <person name="Rooney T."/>
            <person name="Rowley D."/>
            <person name="Sakano H."/>
            <person name="Salzberg S.L."/>
            <person name="Schwartz J.R."/>
            <person name="Shinn P."/>
            <person name="Southwick A.M."/>
            <person name="Sun H."/>
            <person name="Tallon L.J."/>
            <person name="Tambunga G."/>
            <person name="Toriumi M.J."/>
            <person name="Town C.D."/>
            <person name="Utterback T."/>
            <person name="Van Aken S."/>
            <person name="Vaysberg M."/>
            <person name="Vysotskaia V.S."/>
            <person name="Walker M."/>
            <person name="Wu D."/>
            <person name="Yu G."/>
            <person name="Fraser C.M."/>
            <person name="Venter J.C."/>
            <person name="Davis R.W."/>
        </authorList>
    </citation>
    <scope>NUCLEOTIDE SEQUENCE [LARGE SCALE GENOMIC DNA]</scope>
    <source>
        <strain>cv. Columbia</strain>
    </source>
</reference>
<reference key="2">
    <citation type="journal article" date="2017" name="Plant J.">
        <title>Araport11: a complete reannotation of the Arabidopsis thaliana reference genome.</title>
        <authorList>
            <person name="Cheng C.Y."/>
            <person name="Krishnakumar V."/>
            <person name="Chan A.P."/>
            <person name="Thibaud-Nissen F."/>
            <person name="Schobel S."/>
            <person name="Town C.D."/>
        </authorList>
    </citation>
    <scope>GENOME REANNOTATION</scope>
    <source>
        <strain>cv. Columbia</strain>
    </source>
</reference>
<reference key="3">
    <citation type="submission" date="2008-10" db="EMBL/GenBank/DDBJ databases">
        <title>Arabidopsis ORF clones.</title>
        <authorList>
            <person name="de los Reyes C."/>
            <person name="Quan R."/>
            <person name="Chen H."/>
            <person name="Bautista V."/>
            <person name="Kim C.J."/>
            <person name="Ecker J.R."/>
        </authorList>
    </citation>
    <scope>NUCLEOTIDE SEQUENCE [LARGE SCALE MRNA] (ISOFORM 1)</scope>
    <source>
        <strain>cv. Columbia</strain>
    </source>
</reference>
<reference key="4">
    <citation type="journal article" date="2004" name="Mol. Cell. Proteomics">
        <title>Identification of the linker-SH2 domain of STAT as the origin of the SH2 domain using two-dimensional structural alignment.</title>
        <authorList>
            <person name="Gao Q."/>
            <person name="Hua J."/>
            <person name="Kimura R."/>
            <person name="Headd J.J."/>
            <person name="Fu X.-Y."/>
            <person name="Chin Y.E."/>
        </authorList>
    </citation>
    <scope>TISSUE SPECIFICITY</scope>
    <scope>PHOSPHORYLATION AT TYROSINE RESIDUES</scope>
    <source>
        <strain>cv. Columbia</strain>
    </source>
</reference>
<reference key="5">
    <citation type="journal article" date="2004" name="Trends Plant Sci.">
        <title>SH2 domains in plants imply new signalling scenarios.</title>
        <authorList>
            <person name="Williams J.G."/>
            <person name="Zvelebil M."/>
        </authorList>
    </citation>
    <scope>GENE FAMILY</scope>
</reference>
<reference key="6">
    <citation type="journal article" date="2008" name="Development">
        <title>A new family of transcription factors.</title>
        <authorList>
            <person name="Yamada Y."/>
            <person name="Wang H.Y."/>
            <person name="Fukuzawa M."/>
            <person name="Barton G.J."/>
            <person name="Williams J.G."/>
        </authorList>
    </citation>
    <scope>GENE FAMILY</scope>
</reference>
<proteinExistence type="evidence at protein level"/>
<gene>
    <name evidence="4" type="primary">SHA</name>
    <name evidence="5" type="synonym">STATLA</name>
    <name evidence="7" type="ordered locus">At1g17040</name>
    <name evidence="8" type="ORF">F20D23.26</name>
</gene>
<comment type="alternative products">
    <event type="alternative splicing"/>
    <isoform>
        <id>B5X561-1</id>
        <name>1</name>
        <sequence type="displayed"/>
    </isoform>
    <isoform>
        <id>B5X561-2</id>
        <name>2</name>
        <sequence type="described" ref="VSP_059035"/>
    </isoform>
    <isoform>
        <id>B5X561-3</id>
        <name>3</name>
        <sequence type="described" ref="VSP_059036 VSP_059037"/>
    </isoform>
</comment>
<comment type="tissue specificity">
    <text evidence="3">Expressed in roots, leaves, stems and flowers.</text>
</comment>
<comment type="PTM">
    <text evidence="3">Phosphorylated on tyrosine residues.</text>
</comment>
<comment type="sequence caution" evidence="6">
    <conflict type="erroneous gene model prediction">
        <sequence resource="EMBL-CDS" id="AAD50031"/>
    </conflict>
</comment>
<organism>
    <name type="scientific">Arabidopsis thaliana</name>
    <name type="common">Mouse-ear cress</name>
    <dbReference type="NCBI Taxonomy" id="3702"/>
    <lineage>
        <taxon>Eukaryota</taxon>
        <taxon>Viridiplantae</taxon>
        <taxon>Streptophyta</taxon>
        <taxon>Embryophyta</taxon>
        <taxon>Tracheophyta</taxon>
        <taxon>Spermatophyta</taxon>
        <taxon>Magnoliopsida</taxon>
        <taxon>eudicotyledons</taxon>
        <taxon>Gunneridae</taxon>
        <taxon>Pentapetalae</taxon>
        <taxon>rosids</taxon>
        <taxon>malvids</taxon>
        <taxon>Brassicales</taxon>
        <taxon>Brassicaceae</taxon>
        <taxon>Camelineae</taxon>
        <taxon>Arabidopsis</taxon>
    </lineage>
</organism>
<dbReference type="EMBL" id="AC007651">
    <property type="protein sequence ID" value="AAD50031.1"/>
    <property type="status" value="ALT_SEQ"/>
    <property type="molecule type" value="Genomic_DNA"/>
</dbReference>
<dbReference type="EMBL" id="CP002684">
    <property type="protein sequence ID" value="AEE29533.1"/>
    <property type="molecule type" value="Genomic_DNA"/>
</dbReference>
<dbReference type="EMBL" id="CP002684">
    <property type="protein sequence ID" value="AEE29534.1"/>
    <property type="molecule type" value="Genomic_DNA"/>
</dbReference>
<dbReference type="EMBL" id="CP002684">
    <property type="protein sequence ID" value="ANM58869.1"/>
    <property type="molecule type" value="Genomic_DNA"/>
</dbReference>
<dbReference type="EMBL" id="BT046180">
    <property type="protein sequence ID" value="ACI49779.1"/>
    <property type="molecule type" value="mRNA"/>
</dbReference>
<dbReference type="PIR" id="B86306">
    <property type="entry name" value="B86306"/>
</dbReference>
<dbReference type="RefSeq" id="NP_001185018.1">
    <molecule id="B5X561-2"/>
    <property type="nucleotide sequence ID" value="NM_001198089.1"/>
</dbReference>
<dbReference type="RefSeq" id="NP_001321275.1">
    <molecule id="B5X561-3"/>
    <property type="nucleotide sequence ID" value="NM_001332274.1"/>
</dbReference>
<dbReference type="RefSeq" id="NP_173147.2">
    <molecule id="B5X561-1"/>
    <property type="nucleotide sequence ID" value="NM_101564.4"/>
</dbReference>
<dbReference type="FunCoup" id="B5X561">
    <property type="interactions" value="960"/>
</dbReference>
<dbReference type="STRING" id="3702.B5X561"/>
<dbReference type="iPTMnet" id="B5X561"/>
<dbReference type="PaxDb" id="3702-AT1G17040.2"/>
<dbReference type="ProteomicsDB" id="234558">
    <molecule id="B5X561-1"/>
</dbReference>
<dbReference type="EnsemblPlants" id="AT1G17040.1">
    <molecule id="B5X561-1"/>
    <property type="protein sequence ID" value="AT1G17040.1"/>
    <property type="gene ID" value="AT1G17040"/>
</dbReference>
<dbReference type="EnsemblPlants" id="AT1G17040.2">
    <molecule id="B5X561-2"/>
    <property type="protein sequence ID" value="AT1G17040.2"/>
    <property type="gene ID" value="AT1G17040"/>
</dbReference>
<dbReference type="EnsemblPlants" id="AT1G17040.3">
    <molecule id="B5X561-3"/>
    <property type="protein sequence ID" value="AT1G17040.3"/>
    <property type="gene ID" value="AT1G17040"/>
</dbReference>
<dbReference type="GeneID" id="838274"/>
<dbReference type="Gramene" id="AT1G17040.1">
    <molecule id="B5X561-1"/>
    <property type="protein sequence ID" value="AT1G17040.1"/>
    <property type="gene ID" value="AT1G17040"/>
</dbReference>
<dbReference type="Gramene" id="AT1G17040.2">
    <molecule id="B5X561-2"/>
    <property type="protein sequence ID" value="AT1G17040.2"/>
    <property type="gene ID" value="AT1G17040"/>
</dbReference>
<dbReference type="Gramene" id="AT1G17040.3">
    <molecule id="B5X561-3"/>
    <property type="protein sequence ID" value="AT1G17040.3"/>
    <property type="gene ID" value="AT1G17040"/>
</dbReference>
<dbReference type="KEGG" id="ath:AT1G17040"/>
<dbReference type="Araport" id="AT1G17040"/>
<dbReference type="TAIR" id="AT1G17040">
    <property type="gene designation" value="SHA"/>
</dbReference>
<dbReference type="eggNOG" id="ENOG502QRR2">
    <property type="taxonomic scope" value="Eukaryota"/>
</dbReference>
<dbReference type="HOGENOM" id="CLU_014741_0_0_1"/>
<dbReference type="InParanoid" id="B5X561"/>
<dbReference type="OMA" id="RVSGCQD"/>
<dbReference type="PhylomeDB" id="B5X561"/>
<dbReference type="PRO" id="PR:B5X561"/>
<dbReference type="Proteomes" id="UP000006548">
    <property type="component" value="Chromosome 1"/>
</dbReference>
<dbReference type="ExpressionAtlas" id="B5X561">
    <property type="expression patterns" value="baseline and differential"/>
</dbReference>
<dbReference type="GO" id="GO:0003700">
    <property type="term" value="F:DNA-binding transcription factor activity"/>
    <property type="evidence" value="ECO:0007669"/>
    <property type="project" value="InterPro"/>
</dbReference>
<dbReference type="GO" id="GO:0007165">
    <property type="term" value="P:signal transduction"/>
    <property type="evidence" value="ECO:0007669"/>
    <property type="project" value="InterPro"/>
</dbReference>
<dbReference type="CDD" id="cd10338">
    <property type="entry name" value="SH2_SHA"/>
    <property type="match status" value="1"/>
</dbReference>
<dbReference type="Gene3D" id="2.60.120.200">
    <property type="match status" value="1"/>
</dbReference>
<dbReference type="Gene3D" id="3.30.505.10">
    <property type="entry name" value="SH2 domain"/>
    <property type="match status" value="1"/>
</dbReference>
<dbReference type="InterPro" id="IPR013320">
    <property type="entry name" value="ConA-like_dom_sf"/>
</dbReference>
<dbReference type="InterPro" id="IPR000980">
    <property type="entry name" value="SH2"/>
</dbReference>
<dbReference type="InterPro" id="IPR036860">
    <property type="entry name" value="SH2_dom_sf"/>
</dbReference>
<dbReference type="InterPro" id="IPR001217">
    <property type="entry name" value="STAT"/>
</dbReference>
<dbReference type="PANTHER" id="PTHR11801">
    <property type="entry name" value="SIGNAL TRANSDUCER AND ACTIVATOR OF TRANSCRIPTION"/>
    <property type="match status" value="1"/>
</dbReference>
<dbReference type="Pfam" id="PF13385">
    <property type="entry name" value="Laminin_G_3"/>
    <property type="match status" value="1"/>
</dbReference>
<dbReference type="SUPFAM" id="SSF49899">
    <property type="entry name" value="Concanavalin A-like lectins/glucanases"/>
    <property type="match status" value="1"/>
</dbReference>
<dbReference type="SUPFAM" id="SSF55550">
    <property type="entry name" value="SH2 domain"/>
    <property type="match status" value="1"/>
</dbReference>
<dbReference type="PROSITE" id="PS50001">
    <property type="entry name" value="SH2"/>
    <property type="match status" value="1"/>
</dbReference>
<protein>
    <recommendedName>
        <fullName evidence="4">SH2 domain-containing protein A</fullName>
        <shortName evidence="4">AtSHA</shortName>
    </recommendedName>
    <alternativeName>
        <fullName evidence="5">STAT-type linker-SH2 domain factor A</fullName>
    </alternativeName>
</protein>